<dbReference type="EMBL" id="CP000964">
    <property type="protein sequence ID" value="ACI08211.1"/>
    <property type="molecule type" value="Genomic_DNA"/>
</dbReference>
<dbReference type="SMR" id="B5XXH6"/>
<dbReference type="KEGG" id="kpe:KPK_3464"/>
<dbReference type="HOGENOM" id="CLU_108696_5_1_6"/>
<dbReference type="UniPathway" id="UPA00094"/>
<dbReference type="Proteomes" id="UP000001734">
    <property type="component" value="Chromosome"/>
</dbReference>
<dbReference type="GO" id="GO:0005829">
    <property type="term" value="C:cytosol"/>
    <property type="evidence" value="ECO:0007669"/>
    <property type="project" value="TreeGrafter"/>
</dbReference>
<dbReference type="GO" id="GO:0016020">
    <property type="term" value="C:membrane"/>
    <property type="evidence" value="ECO:0007669"/>
    <property type="project" value="GOC"/>
</dbReference>
<dbReference type="GO" id="GO:0000035">
    <property type="term" value="F:acyl binding"/>
    <property type="evidence" value="ECO:0007669"/>
    <property type="project" value="TreeGrafter"/>
</dbReference>
<dbReference type="GO" id="GO:0000036">
    <property type="term" value="F:acyl carrier activity"/>
    <property type="evidence" value="ECO:0007669"/>
    <property type="project" value="UniProtKB-UniRule"/>
</dbReference>
<dbReference type="GO" id="GO:0009245">
    <property type="term" value="P:lipid A biosynthetic process"/>
    <property type="evidence" value="ECO:0007669"/>
    <property type="project" value="TreeGrafter"/>
</dbReference>
<dbReference type="FunFam" id="1.10.1200.10:FF:000001">
    <property type="entry name" value="Acyl carrier protein"/>
    <property type="match status" value="1"/>
</dbReference>
<dbReference type="Gene3D" id="1.10.1200.10">
    <property type="entry name" value="ACP-like"/>
    <property type="match status" value="1"/>
</dbReference>
<dbReference type="HAMAP" id="MF_01217">
    <property type="entry name" value="Acyl_carrier"/>
    <property type="match status" value="1"/>
</dbReference>
<dbReference type="InterPro" id="IPR003231">
    <property type="entry name" value="ACP"/>
</dbReference>
<dbReference type="InterPro" id="IPR036736">
    <property type="entry name" value="ACP-like_sf"/>
</dbReference>
<dbReference type="InterPro" id="IPR009081">
    <property type="entry name" value="PP-bd_ACP"/>
</dbReference>
<dbReference type="InterPro" id="IPR006162">
    <property type="entry name" value="Ppantetheine_attach_site"/>
</dbReference>
<dbReference type="NCBIfam" id="TIGR00517">
    <property type="entry name" value="acyl_carrier"/>
    <property type="match status" value="1"/>
</dbReference>
<dbReference type="NCBIfam" id="NF002148">
    <property type="entry name" value="PRK00982.1-2"/>
    <property type="match status" value="1"/>
</dbReference>
<dbReference type="NCBIfam" id="NF002149">
    <property type="entry name" value="PRK00982.1-3"/>
    <property type="match status" value="1"/>
</dbReference>
<dbReference type="NCBIfam" id="NF002150">
    <property type="entry name" value="PRK00982.1-4"/>
    <property type="match status" value="1"/>
</dbReference>
<dbReference type="NCBIfam" id="NF002151">
    <property type="entry name" value="PRK00982.1-5"/>
    <property type="match status" value="1"/>
</dbReference>
<dbReference type="PANTHER" id="PTHR20863">
    <property type="entry name" value="ACYL CARRIER PROTEIN"/>
    <property type="match status" value="1"/>
</dbReference>
<dbReference type="PANTHER" id="PTHR20863:SF76">
    <property type="entry name" value="CARRIER DOMAIN-CONTAINING PROTEIN"/>
    <property type="match status" value="1"/>
</dbReference>
<dbReference type="Pfam" id="PF00550">
    <property type="entry name" value="PP-binding"/>
    <property type="match status" value="1"/>
</dbReference>
<dbReference type="SUPFAM" id="SSF47336">
    <property type="entry name" value="ACP-like"/>
    <property type="match status" value="1"/>
</dbReference>
<dbReference type="PROSITE" id="PS50075">
    <property type="entry name" value="CARRIER"/>
    <property type="match status" value="1"/>
</dbReference>
<dbReference type="PROSITE" id="PS00012">
    <property type="entry name" value="PHOSPHOPANTETHEINE"/>
    <property type="match status" value="1"/>
</dbReference>
<comment type="function">
    <text evidence="1">Carrier of the growing fatty acid chain in fatty acid biosynthesis.</text>
</comment>
<comment type="pathway">
    <text evidence="1">Lipid metabolism; fatty acid biosynthesis.</text>
</comment>
<comment type="subcellular location">
    <subcellularLocation>
        <location evidence="1">Cytoplasm</location>
    </subcellularLocation>
</comment>
<comment type="PTM">
    <text evidence="1">4'-phosphopantetheine is transferred from CoA to a specific serine of apo-ACP by AcpS. This modification is essential for activity because fatty acids are bound in thioester linkage to the sulfhydryl of the prosthetic group.</text>
</comment>
<comment type="similarity">
    <text evidence="1">Belongs to the acyl carrier protein (ACP) family.</text>
</comment>
<gene>
    <name evidence="1" type="primary">acpP</name>
    <name type="ordered locus">KPK_3464</name>
</gene>
<name>ACP_KLEP3</name>
<proteinExistence type="inferred from homology"/>
<evidence type="ECO:0000255" key="1">
    <source>
        <dbReference type="HAMAP-Rule" id="MF_01217"/>
    </source>
</evidence>
<evidence type="ECO:0000255" key="2">
    <source>
        <dbReference type="PROSITE-ProRule" id="PRU00258"/>
    </source>
</evidence>
<keyword id="KW-0963">Cytoplasm</keyword>
<keyword id="KW-0275">Fatty acid biosynthesis</keyword>
<keyword id="KW-0276">Fatty acid metabolism</keyword>
<keyword id="KW-0444">Lipid biosynthesis</keyword>
<keyword id="KW-0443">Lipid metabolism</keyword>
<keyword id="KW-0596">Phosphopantetheine</keyword>
<keyword id="KW-0597">Phosphoprotein</keyword>
<organism>
    <name type="scientific">Klebsiella pneumoniae (strain 342)</name>
    <dbReference type="NCBI Taxonomy" id="507522"/>
    <lineage>
        <taxon>Bacteria</taxon>
        <taxon>Pseudomonadati</taxon>
        <taxon>Pseudomonadota</taxon>
        <taxon>Gammaproteobacteria</taxon>
        <taxon>Enterobacterales</taxon>
        <taxon>Enterobacteriaceae</taxon>
        <taxon>Klebsiella/Raoultella group</taxon>
        <taxon>Klebsiella</taxon>
        <taxon>Klebsiella pneumoniae complex</taxon>
    </lineage>
</organism>
<protein>
    <recommendedName>
        <fullName evidence="1">Acyl carrier protein</fullName>
        <shortName evidence="1">ACP</shortName>
    </recommendedName>
</protein>
<reference key="1">
    <citation type="journal article" date="2008" name="PLoS Genet.">
        <title>Complete genome sequence of the N2-fixing broad host range endophyte Klebsiella pneumoniae 342 and virulence predictions verified in mice.</title>
        <authorList>
            <person name="Fouts D.E."/>
            <person name="Tyler H.L."/>
            <person name="DeBoy R.T."/>
            <person name="Daugherty S."/>
            <person name="Ren Q."/>
            <person name="Badger J.H."/>
            <person name="Durkin A.S."/>
            <person name="Huot H."/>
            <person name="Shrivastava S."/>
            <person name="Kothari S."/>
            <person name="Dodson R.J."/>
            <person name="Mohamoud Y."/>
            <person name="Khouri H."/>
            <person name="Roesch L.F.W."/>
            <person name="Krogfelt K.A."/>
            <person name="Struve C."/>
            <person name="Triplett E.W."/>
            <person name="Methe B.A."/>
        </authorList>
    </citation>
    <scope>NUCLEOTIDE SEQUENCE [LARGE SCALE GENOMIC DNA]</scope>
    <source>
        <strain>342</strain>
    </source>
</reference>
<feature type="chain" id="PRO_1000139036" description="Acyl carrier protein">
    <location>
        <begin position="1"/>
        <end position="78"/>
    </location>
</feature>
<feature type="domain" description="Carrier" evidence="2">
    <location>
        <begin position="2"/>
        <end position="77"/>
    </location>
</feature>
<feature type="modified residue" description="O-(pantetheine 4'-phosphoryl)serine" evidence="2">
    <location>
        <position position="37"/>
    </location>
</feature>
<accession>B5XXH6</accession>
<sequence>MSTIEERVKKIIGEQLGVKQEEVTNNASFVEDLGADSLDTVELVMALEEEFDTEIPDEEAEKITTVQAAIDYINGHQA</sequence>